<dbReference type="EC" id="2.5.1.3" evidence="1"/>
<dbReference type="EMBL" id="CP000127">
    <property type="protein sequence ID" value="ABA57123.1"/>
    <property type="molecule type" value="Genomic_DNA"/>
</dbReference>
<dbReference type="RefSeq" id="WP_002813226.1">
    <property type="nucleotide sequence ID" value="NC_007484.1"/>
</dbReference>
<dbReference type="SMR" id="Q3JDH3"/>
<dbReference type="FunCoup" id="Q3JDH3">
    <property type="interactions" value="449"/>
</dbReference>
<dbReference type="STRING" id="323261.Noc_0604"/>
<dbReference type="KEGG" id="noc:Noc_0604"/>
<dbReference type="eggNOG" id="COG0352">
    <property type="taxonomic scope" value="Bacteria"/>
</dbReference>
<dbReference type="HOGENOM" id="CLU_018272_3_1_6"/>
<dbReference type="InParanoid" id="Q3JDH3"/>
<dbReference type="UniPathway" id="UPA00060">
    <property type="reaction ID" value="UER00141"/>
</dbReference>
<dbReference type="Proteomes" id="UP000006838">
    <property type="component" value="Chromosome"/>
</dbReference>
<dbReference type="GO" id="GO:0005737">
    <property type="term" value="C:cytoplasm"/>
    <property type="evidence" value="ECO:0007669"/>
    <property type="project" value="TreeGrafter"/>
</dbReference>
<dbReference type="GO" id="GO:0000287">
    <property type="term" value="F:magnesium ion binding"/>
    <property type="evidence" value="ECO:0007669"/>
    <property type="project" value="UniProtKB-UniRule"/>
</dbReference>
<dbReference type="GO" id="GO:0004789">
    <property type="term" value="F:thiamine-phosphate diphosphorylase activity"/>
    <property type="evidence" value="ECO:0007669"/>
    <property type="project" value="UniProtKB-UniRule"/>
</dbReference>
<dbReference type="GO" id="GO:0009228">
    <property type="term" value="P:thiamine biosynthetic process"/>
    <property type="evidence" value="ECO:0007669"/>
    <property type="project" value="UniProtKB-KW"/>
</dbReference>
<dbReference type="GO" id="GO:0009229">
    <property type="term" value="P:thiamine diphosphate biosynthetic process"/>
    <property type="evidence" value="ECO:0007669"/>
    <property type="project" value="UniProtKB-UniRule"/>
</dbReference>
<dbReference type="CDD" id="cd00564">
    <property type="entry name" value="TMP_TenI"/>
    <property type="match status" value="1"/>
</dbReference>
<dbReference type="FunFam" id="3.20.20.70:FF:000096">
    <property type="entry name" value="Thiamine-phosphate synthase"/>
    <property type="match status" value="1"/>
</dbReference>
<dbReference type="Gene3D" id="3.20.20.70">
    <property type="entry name" value="Aldolase class I"/>
    <property type="match status" value="1"/>
</dbReference>
<dbReference type="HAMAP" id="MF_00097">
    <property type="entry name" value="TMP_synthase"/>
    <property type="match status" value="1"/>
</dbReference>
<dbReference type="InterPro" id="IPR013785">
    <property type="entry name" value="Aldolase_TIM"/>
</dbReference>
<dbReference type="InterPro" id="IPR036206">
    <property type="entry name" value="ThiamineP_synth_sf"/>
</dbReference>
<dbReference type="InterPro" id="IPR022998">
    <property type="entry name" value="ThiamineP_synth_TenI"/>
</dbReference>
<dbReference type="InterPro" id="IPR034291">
    <property type="entry name" value="TMP_synthase"/>
</dbReference>
<dbReference type="NCBIfam" id="TIGR00693">
    <property type="entry name" value="thiE"/>
    <property type="match status" value="1"/>
</dbReference>
<dbReference type="PANTHER" id="PTHR20857">
    <property type="entry name" value="THIAMINE-PHOSPHATE PYROPHOSPHORYLASE"/>
    <property type="match status" value="1"/>
</dbReference>
<dbReference type="PANTHER" id="PTHR20857:SF15">
    <property type="entry name" value="THIAMINE-PHOSPHATE SYNTHASE"/>
    <property type="match status" value="1"/>
</dbReference>
<dbReference type="Pfam" id="PF02581">
    <property type="entry name" value="TMP-TENI"/>
    <property type="match status" value="1"/>
</dbReference>
<dbReference type="SUPFAM" id="SSF51391">
    <property type="entry name" value="Thiamin phosphate synthase"/>
    <property type="match status" value="1"/>
</dbReference>
<keyword id="KW-0460">Magnesium</keyword>
<keyword id="KW-0479">Metal-binding</keyword>
<keyword id="KW-1185">Reference proteome</keyword>
<keyword id="KW-0784">Thiamine biosynthesis</keyword>
<keyword id="KW-0808">Transferase</keyword>
<name>THIE_NITOC</name>
<sequence>MSSSIRGLYAIADTHLLPRQDLGNAVALALQGGASLIQYRDKSQEITRRYKEAESLQRICHQYQAPLIINDDALLAAEIGAEGVHLGQDDSSITSARKILGAKAIIGISCYNDLARAIAAEQAGADYVAFGRLFPSITKPEPIWASLALLREARKNLNLPIVAIGGITPENALQVIEAGASAVAVIGGLFKSRDIRAAAAAYRQHFPSWNLPKPRLF</sequence>
<organism>
    <name type="scientific">Nitrosococcus oceani (strain ATCC 19707 / BCRC 17464 / JCM 30415 / NCIMB 11848 / C-107)</name>
    <dbReference type="NCBI Taxonomy" id="323261"/>
    <lineage>
        <taxon>Bacteria</taxon>
        <taxon>Pseudomonadati</taxon>
        <taxon>Pseudomonadota</taxon>
        <taxon>Gammaproteobacteria</taxon>
        <taxon>Chromatiales</taxon>
        <taxon>Chromatiaceae</taxon>
        <taxon>Nitrosococcus</taxon>
    </lineage>
</organism>
<evidence type="ECO:0000255" key="1">
    <source>
        <dbReference type="HAMAP-Rule" id="MF_00097"/>
    </source>
</evidence>
<feature type="chain" id="PRO_0000336415" description="Thiamine-phosphate synthase">
    <location>
        <begin position="1"/>
        <end position="217"/>
    </location>
</feature>
<feature type="binding site" evidence="1">
    <location>
        <begin position="38"/>
        <end position="42"/>
    </location>
    <ligand>
        <name>4-amino-2-methyl-5-(diphosphooxymethyl)pyrimidine</name>
        <dbReference type="ChEBI" id="CHEBI:57841"/>
    </ligand>
</feature>
<feature type="binding site" evidence="1">
    <location>
        <position position="70"/>
    </location>
    <ligand>
        <name>4-amino-2-methyl-5-(diphosphooxymethyl)pyrimidine</name>
        <dbReference type="ChEBI" id="CHEBI:57841"/>
    </ligand>
</feature>
<feature type="binding site" evidence="1">
    <location>
        <position position="71"/>
    </location>
    <ligand>
        <name>Mg(2+)</name>
        <dbReference type="ChEBI" id="CHEBI:18420"/>
    </ligand>
</feature>
<feature type="binding site" evidence="1">
    <location>
        <position position="90"/>
    </location>
    <ligand>
        <name>Mg(2+)</name>
        <dbReference type="ChEBI" id="CHEBI:18420"/>
    </ligand>
</feature>
<feature type="binding site" evidence="1">
    <location>
        <position position="109"/>
    </location>
    <ligand>
        <name>4-amino-2-methyl-5-(diphosphooxymethyl)pyrimidine</name>
        <dbReference type="ChEBI" id="CHEBI:57841"/>
    </ligand>
</feature>
<feature type="binding site" evidence="1">
    <location>
        <begin position="136"/>
        <end position="138"/>
    </location>
    <ligand>
        <name>2-[(2R,5Z)-2-carboxy-4-methylthiazol-5(2H)-ylidene]ethyl phosphate</name>
        <dbReference type="ChEBI" id="CHEBI:62899"/>
    </ligand>
</feature>
<feature type="binding site" evidence="1">
    <location>
        <position position="139"/>
    </location>
    <ligand>
        <name>4-amino-2-methyl-5-(diphosphooxymethyl)pyrimidine</name>
        <dbReference type="ChEBI" id="CHEBI:57841"/>
    </ligand>
</feature>
<feature type="binding site" evidence="1">
    <location>
        <position position="166"/>
    </location>
    <ligand>
        <name>2-[(2R,5Z)-2-carboxy-4-methylthiazol-5(2H)-ylidene]ethyl phosphate</name>
        <dbReference type="ChEBI" id="CHEBI:62899"/>
    </ligand>
</feature>
<protein>
    <recommendedName>
        <fullName evidence="1">Thiamine-phosphate synthase</fullName>
        <shortName evidence="1">TP synthase</shortName>
        <shortName evidence="1">TPS</shortName>
        <ecNumber evidence="1">2.5.1.3</ecNumber>
    </recommendedName>
    <alternativeName>
        <fullName evidence="1">Thiamine-phosphate pyrophosphorylase</fullName>
        <shortName evidence="1">TMP pyrophosphorylase</shortName>
        <shortName evidence="1">TMP-PPase</shortName>
    </alternativeName>
</protein>
<proteinExistence type="inferred from homology"/>
<gene>
    <name evidence="1" type="primary">thiE</name>
    <name type="ordered locus">Noc_0604</name>
</gene>
<reference key="1">
    <citation type="journal article" date="2006" name="Appl. Environ. Microbiol.">
        <title>Complete genome sequence of the marine, chemolithoautotrophic, ammonia-oxidizing bacterium Nitrosococcus oceani ATCC 19707.</title>
        <authorList>
            <person name="Klotz M.G."/>
            <person name="Arp D.J."/>
            <person name="Chain P.S.G."/>
            <person name="El-Sheikh A.F."/>
            <person name="Hauser L.J."/>
            <person name="Hommes N.G."/>
            <person name="Larimer F.W."/>
            <person name="Malfatti S.A."/>
            <person name="Norton J.M."/>
            <person name="Poret-Peterson A.T."/>
            <person name="Vergez L.M."/>
            <person name="Ward B.B."/>
        </authorList>
    </citation>
    <scope>NUCLEOTIDE SEQUENCE [LARGE SCALE GENOMIC DNA]</scope>
    <source>
        <strain>ATCC 19707 / BCRC 17464 / JCM 30415 / NCIMB 11848 / C-107</strain>
    </source>
</reference>
<comment type="function">
    <text evidence="1">Condenses 4-methyl-5-(beta-hydroxyethyl)thiazole monophosphate (THZ-P) and 2-methyl-4-amino-5-hydroxymethyl pyrimidine pyrophosphate (HMP-PP) to form thiamine monophosphate (TMP).</text>
</comment>
<comment type="catalytic activity">
    <reaction evidence="1">
        <text>2-[(2R,5Z)-2-carboxy-4-methylthiazol-5(2H)-ylidene]ethyl phosphate + 4-amino-2-methyl-5-(diphosphooxymethyl)pyrimidine + 2 H(+) = thiamine phosphate + CO2 + diphosphate</text>
        <dbReference type="Rhea" id="RHEA:47844"/>
        <dbReference type="ChEBI" id="CHEBI:15378"/>
        <dbReference type="ChEBI" id="CHEBI:16526"/>
        <dbReference type="ChEBI" id="CHEBI:33019"/>
        <dbReference type="ChEBI" id="CHEBI:37575"/>
        <dbReference type="ChEBI" id="CHEBI:57841"/>
        <dbReference type="ChEBI" id="CHEBI:62899"/>
        <dbReference type="EC" id="2.5.1.3"/>
    </reaction>
</comment>
<comment type="catalytic activity">
    <reaction evidence="1">
        <text>2-(2-carboxy-4-methylthiazol-5-yl)ethyl phosphate + 4-amino-2-methyl-5-(diphosphooxymethyl)pyrimidine + 2 H(+) = thiamine phosphate + CO2 + diphosphate</text>
        <dbReference type="Rhea" id="RHEA:47848"/>
        <dbReference type="ChEBI" id="CHEBI:15378"/>
        <dbReference type="ChEBI" id="CHEBI:16526"/>
        <dbReference type="ChEBI" id="CHEBI:33019"/>
        <dbReference type="ChEBI" id="CHEBI:37575"/>
        <dbReference type="ChEBI" id="CHEBI:57841"/>
        <dbReference type="ChEBI" id="CHEBI:62890"/>
        <dbReference type="EC" id="2.5.1.3"/>
    </reaction>
</comment>
<comment type="catalytic activity">
    <reaction evidence="1">
        <text>4-methyl-5-(2-phosphooxyethyl)-thiazole + 4-amino-2-methyl-5-(diphosphooxymethyl)pyrimidine + H(+) = thiamine phosphate + diphosphate</text>
        <dbReference type="Rhea" id="RHEA:22328"/>
        <dbReference type="ChEBI" id="CHEBI:15378"/>
        <dbReference type="ChEBI" id="CHEBI:33019"/>
        <dbReference type="ChEBI" id="CHEBI:37575"/>
        <dbReference type="ChEBI" id="CHEBI:57841"/>
        <dbReference type="ChEBI" id="CHEBI:58296"/>
        <dbReference type="EC" id="2.5.1.3"/>
    </reaction>
</comment>
<comment type="cofactor">
    <cofactor evidence="1">
        <name>Mg(2+)</name>
        <dbReference type="ChEBI" id="CHEBI:18420"/>
    </cofactor>
    <text evidence="1">Binds 1 Mg(2+) ion per subunit.</text>
</comment>
<comment type="pathway">
    <text evidence="1">Cofactor biosynthesis; thiamine diphosphate biosynthesis; thiamine phosphate from 4-amino-2-methyl-5-diphosphomethylpyrimidine and 4-methyl-5-(2-phosphoethyl)-thiazole: step 1/1.</text>
</comment>
<comment type="similarity">
    <text evidence="1">Belongs to the thiamine-phosphate synthase family.</text>
</comment>
<accession>Q3JDH3</accession>